<protein>
    <recommendedName>
        <fullName evidence="1">Major DNA-binding protein</fullName>
    </recommendedName>
</protein>
<name>DNBI_VZVD</name>
<reference key="1">
    <citation type="journal article" date="1986" name="J. Gen. Virol.">
        <title>The complete DNA sequence of varicella-zoster virus.</title>
        <authorList>
            <person name="Davison A.J."/>
            <person name="Scott J.E."/>
        </authorList>
    </citation>
    <scope>NUCLEOTIDE SEQUENCE [LARGE SCALE GENOMIC DNA]</scope>
</reference>
<proteinExistence type="inferred from homology"/>
<gene>
    <name evidence="1" type="primary">DBP</name>
    <name type="ORF">ORF29</name>
</gene>
<comment type="function">
    <text evidence="1">Plays several crucial roles in viral infection. Participates in the opening of the viral DNA origin to initiate replication by interacting with the origin-binding protein. May disrupt loops, hairpins and other secondary structures present on ssDNA to reduce and eliminate pausing of viral DNA polymerase at specific sites during elongation. Promotes viral DNA recombination by performing strand-transfer, characterized by the ability to transfer a DNA strand from a linear duplex to a complementary single-stranded DNA circle. Can also catalyze the renaturation of complementary single strands. Additionally, reorganizes the host cell nucleus, leading to the formation of prereplicative sites and replication compartments. This process is driven by the protein which can form double-helical filaments in the absence of DNA.</text>
</comment>
<comment type="subunit">
    <text evidence="1">Homooligomers. Forms double-helical filaments necessary for the formation of replication compartments within the host nucleus. Interacts with the origin-binding protein. Interacts with the helicase primase complex; this interaction stimulates primer synthesis activity of the helicase-primase complex. Interacts with the DNA polymerase. Interacts with the alkaline exonuclease; this interaction increases its nuclease processivity.</text>
</comment>
<comment type="subcellular location">
    <subcellularLocation>
        <location evidence="1">Host nucleus</location>
    </subcellularLocation>
    <text evidence="1">In the absence of DNA replication, found in the nuclear framework-associated structures (prereplicative sites). As viral DNA replication proceeds, it migrates to globular intranuclear structures (replication compartments).</text>
</comment>
<comment type="similarity">
    <text evidence="1">Belongs to the herpesviridae major DNA-binding protein family.</text>
</comment>
<evidence type="ECO:0000255" key="1">
    <source>
        <dbReference type="HAMAP-Rule" id="MF_04007"/>
    </source>
</evidence>
<evidence type="ECO:0000256" key="2">
    <source>
        <dbReference type="SAM" id="MobiDB-lite"/>
    </source>
</evidence>
<organismHost>
    <name type="scientific">Homo sapiens</name>
    <name type="common">Human</name>
    <dbReference type="NCBI Taxonomy" id="9606"/>
</organismHost>
<accession>P09246</accession>
<dbReference type="EMBL" id="X04370">
    <property type="protein sequence ID" value="CAA27912.1"/>
    <property type="molecule type" value="Genomic_DNA"/>
</dbReference>
<dbReference type="PIR" id="C27214">
    <property type="entry name" value="DNBE29"/>
</dbReference>
<dbReference type="SMR" id="P09246"/>
<dbReference type="Proteomes" id="UP000002602">
    <property type="component" value="Genome"/>
</dbReference>
<dbReference type="GO" id="GO:0042025">
    <property type="term" value="C:host cell nucleus"/>
    <property type="evidence" value="ECO:0000314"/>
    <property type="project" value="UniProtKB"/>
</dbReference>
<dbReference type="GO" id="GO:0003677">
    <property type="term" value="F:DNA binding"/>
    <property type="evidence" value="ECO:0000314"/>
    <property type="project" value="UniProtKB"/>
</dbReference>
<dbReference type="GO" id="GO:0003697">
    <property type="term" value="F:single-stranded DNA binding"/>
    <property type="evidence" value="ECO:0007669"/>
    <property type="project" value="InterPro"/>
</dbReference>
<dbReference type="GO" id="GO:0008270">
    <property type="term" value="F:zinc ion binding"/>
    <property type="evidence" value="ECO:0007669"/>
    <property type="project" value="UniProtKB-KW"/>
</dbReference>
<dbReference type="GO" id="GO:0039686">
    <property type="term" value="P:bidirectional double-stranded viral DNA replication"/>
    <property type="evidence" value="ECO:0000314"/>
    <property type="project" value="UniProtKB"/>
</dbReference>
<dbReference type="GO" id="GO:0006260">
    <property type="term" value="P:DNA replication"/>
    <property type="evidence" value="ECO:0007669"/>
    <property type="project" value="UniProtKB-KW"/>
</dbReference>
<dbReference type="FunFam" id="1.20.190.40:FF:000001">
    <property type="entry name" value="Major DNA-binding protein"/>
    <property type="match status" value="1"/>
</dbReference>
<dbReference type="FunFam" id="1.20.190.40:FF:000002">
    <property type="entry name" value="Major DNA-binding protein"/>
    <property type="match status" value="1"/>
</dbReference>
<dbReference type="Gene3D" id="1.10.150.560">
    <property type="match status" value="1"/>
</dbReference>
<dbReference type="Gene3D" id="1.20.190.40">
    <property type="entry name" value="Viral ssDNA binding protein, head domain"/>
    <property type="match status" value="2"/>
</dbReference>
<dbReference type="HAMAP" id="MF_04007">
    <property type="entry name" value="HSV_DNBI"/>
    <property type="match status" value="1"/>
</dbReference>
<dbReference type="InterPro" id="IPR035989">
    <property type="entry name" value="DBP_sf"/>
</dbReference>
<dbReference type="InterPro" id="IPR043031">
    <property type="entry name" value="Viral_ssDBP_head"/>
</dbReference>
<dbReference type="InterPro" id="IPR000635">
    <property type="entry name" value="Viral_ssDNA-bd"/>
</dbReference>
<dbReference type="Pfam" id="PF00747">
    <property type="entry name" value="Viral_DNA_bp"/>
    <property type="match status" value="1"/>
</dbReference>
<dbReference type="SUPFAM" id="SSF118208">
    <property type="entry name" value="Viral ssDNA binding protein"/>
    <property type="match status" value="1"/>
</dbReference>
<feature type="chain" id="PRO_0000115757" description="Major DNA-binding protein">
    <location>
        <begin position="1"/>
        <end position="1204"/>
    </location>
</feature>
<feature type="zinc finger region" evidence="1">
    <location>
        <begin position="497"/>
        <end position="510"/>
    </location>
</feature>
<feature type="region of interest" description="Disordered" evidence="2">
    <location>
        <begin position="289"/>
        <end position="314"/>
    </location>
</feature>
<feature type="region of interest" description="Required for nuclear localization" evidence="1">
    <location>
        <begin position="1177"/>
        <end position="1204"/>
    </location>
</feature>
<feature type="short sequence motif" description="Required for filament formation" evidence="1">
    <location>
        <begin position="841"/>
        <end position="842"/>
    </location>
</feature>
<feature type="short sequence motif" description="Required for filament formation" evidence="1">
    <location>
        <begin position="1146"/>
        <end position="1148"/>
    </location>
</feature>
<sequence length="1204" mass="132140">MENTQKTVTVPTGPLGYVYACRVEDLDLEEISFLAARSTDSDLALLPLMRNLTVEKTFTSSLAVVSGARTTGLAGAGITLKLTTSHFYPSVFVFHGGKHVLPSSAAPNLTRACNAARERFGFSRCQGPPVDGAVETTGAEICTRLGLEPENTILYLVVTALFKEAVFMCNVFLHYGGLDIVHINHGDVIRIPLFPVQLFMPDVNRLVPDPFNTHHRSIGEGFVYPTPFYNTGLCHLIHDCVIAPMAVALRVRNVTAVARGAAHLAFDENHEGAVLPPDITYTYFQSSSSGTTTARGARRNDVNSTSKPSPSGGFERRLASIMAADTALHAEVIFNTGIYEETPTDIKEWPMFIGMEGTLPRLNALGSYTARVAGVIGAMVFSPNSALYLTEVEDSGMTEAKDGGPGPSFNRFYQFAGPHLAANPQTDRDGHVLSSQSTGSSNTEFSVDYLALICGFGAPLLARLLFYLERCDAGAFTGGHGDALKYVTGTFDSEIPCSLCEKHTRPVCAHTTVHRLRQRMPRFGQATRQPIGVFGTMNSQYSDCDPLGNYAPYLILRKPGDQTEAAKATMQDTYRATLERLFIDLEQERLLDRGAPCSSEGLSSVIVDHPTFRRILDTLRARIEQTTTQFMKVLVETRDYKIREGLSEATHSMALTFDPYSGAFCPITNFLVKRTHLAVVQDLALSQCHCVFYGQQVEGRNFRNQFQPVLRRRFVDLFNGGFISTRSITVTLSEGPVSAPNPTLGQDAPAGRTFDGDLARVSVEVIRDIRVKNRVVFSGNCTNLSEAARARLVGLASAYQRQEKRVDMLHGALGFLLKQFHGLLFPRGMPPNSKSPNPQWFWTLLQRNQMPADKLTHEEITTIAAVKRFTEEYAAINFINLPPTCIGELAQFYMANLILKYCDHSQYLINTLTSIITGARRPRDPSSVLHWIRKDVTSAADIETQAKALLEKTENLPELWTTAFTSTHLVRAAMNQRPMVVLGISISKYHGAAGNNRVFQAGNWSGLNGGKNVCPLFTFDRTRRFIIACPRGGFICPVTGPSSGNRETTLSDQVRGIIVSGGAMVQLAIYATVVRAVGARAQHMAFDDWLSLTDDEFLARDLEELHDQIIQTLETPWTVEGALEAVKILDEKTTAGDGETPTNLAFNFDSCEPSHDTTSNVLNISGSNISGSTVPGLKRPPEDDELFDLSGIPIKHGNITMEMI</sequence>
<keyword id="KW-0235">DNA replication</keyword>
<keyword id="KW-0238">DNA-binding</keyword>
<keyword id="KW-1048">Host nucleus</keyword>
<keyword id="KW-0479">Metal-binding</keyword>
<keyword id="KW-1185">Reference proteome</keyword>
<keyword id="KW-0862">Zinc</keyword>
<keyword id="KW-0863">Zinc-finger</keyword>
<organism>
    <name type="scientific">Varicella-zoster virus (strain Dumas)</name>
    <name type="common">HHV-3</name>
    <name type="synonym">Human herpesvirus 3</name>
    <dbReference type="NCBI Taxonomy" id="10338"/>
    <lineage>
        <taxon>Viruses</taxon>
        <taxon>Duplodnaviria</taxon>
        <taxon>Heunggongvirae</taxon>
        <taxon>Peploviricota</taxon>
        <taxon>Herviviricetes</taxon>
        <taxon>Herpesvirales</taxon>
        <taxon>Orthoherpesviridae</taxon>
        <taxon>Alphaherpesvirinae</taxon>
        <taxon>Varicellovirus</taxon>
        <taxon>Varicellovirus humanalpha3</taxon>
        <taxon>Human herpesvirus 3</taxon>
    </lineage>
</organism>